<keyword id="KW-0028">Amino-acid biosynthesis</keyword>
<keyword id="KW-0170">Cobalt</keyword>
<keyword id="KW-0220">Diaminopimelate biosynthesis</keyword>
<keyword id="KW-0378">Hydrolase</keyword>
<keyword id="KW-0457">Lysine biosynthesis</keyword>
<keyword id="KW-0479">Metal-binding</keyword>
<keyword id="KW-1185">Reference proteome</keyword>
<keyword id="KW-0862">Zinc</keyword>
<proteinExistence type="inferred from homology"/>
<evidence type="ECO:0000255" key="1">
    <source>
        <dbReference type="HAMAP-Rule" id="MF_01690"/>
    </source>
</evidence>
<evidence type="ECO:0000305" key="2"/>
<protein>
    <recommendedName>
        <fullName evidence="1">Succinyl-diaminopimelate desuccinylase</fullName>
        <shortName evidence="1">SDAP desuccinylase</shortName>
        <ecNumber evidence="1">3.5.1.18</ecNumber>
    </recommendedName>
    <alternativeName>
        <fullName evidence="1">N-succinyl-LL-2,6-diaminoheptanedioate amidohydrolase</fullName>
    </alternativeName>
</protein>
<sequence>MRLDDPVSLACRLMSYPSVTPDRSGAIPFLAELLSDLGFRCEILSFGNGDVEVKNLYAQYGNGHPNLCFAGHTDVVPPGGTWRTDPFSPQVKDGMLYGRGASDMKAAICAYISAVARLDSVPGCLSFLITGDEEGRWREYGTKSVLDWMTKNGICPDYCVLGEPSSRKRLGDCISIGRRGSLNFELSCRGVQGHVAYPELAHNPIDDVLCILRKIKDTTLDSGTDHFPPSHCEITSIDVGNDVENLIPSSATAAFNIRFNDLHTAESLYRDMDAICASVTSNYTLSHRCFGGASISQPSCYTATLCEVVKEVTGLDARLITDGGTSDACIISSFCPVAELGLPSGTAHKVDECVSVADVLTLAEIYHRFINRFFAVAQSRS</sequence>
<comment type="function">
    <text evidence="1">Catalyzes the hydrolysis of N-succinyl-L,L-diaminopimelic acid (SDAP), forming succinate and LL-2,6-diaminopimelate (DAP), an intermediate involved in the bacterial biosynthesis of lysine and meso-diaminopimelic acid, an essential component of bacterial cell walls.</text>
</comment>
<comment type="catalytic activity">
    <reaction evidence="1">
        <text>N-succinyl-(2S,6S)-2,6-diaminopimelate + H2O = (2S,6S)-2,6-diaminopimelate + succinate</text>
        <dbReference type="Rhea" id="RHEA:22608"/>
        <dbReference type="ChEBI" id="CHEBI:15377"/>
        <dbReference type="ChEBI" id="CHEBI:30031"/>
        <dbReference type="ChEBI" id="CHEBI:57609"/>
        <dbReference type="ChEBI" id="CHEBI:58087"/>
        <dbReference type="EC" id="3.5.1.18"/>
    </reaction>
</comment>
<comment type="cofactor">
    <cofactor evidence="1">
        <name>Zn(2+)</name>
        <dbReference type="ChEBI" id="CHEBI:29105"/>
    </cofactor>
    <cofactor evidence="1">
        <name>Co(2+)</name>
        <dbReference type="ChEBI" id="CHEBI:48828"/>
    </cofactor>
    <text evidence="1">Binds 2 Zn(2+) or Co(2+) ions per subunit.</text>
</comment>
<comment type="pathway">
    <text evidence="1">Amino-acid biosynthesis; L-lysine biosynthesis via DAP pathway; LL-2,6-diaminopimelate from (S)-tetrahydrodipicolinate (succinylase route): step 3/3.</text>
</comment>
<comment type="subunit">
    <text evidence="1">Homodimer.</text>
</comment>
<comment type="similarity">
    <text evidence="1">Belongs to the peptidase M20A family. DapE subfamily.</text>
</comment>
<comment type="sequence caution" evidence="2">
    <conflict type="erroneous initiation">
        <sequence resource="EMBL-CDS" id="ACM49833"/>
    </conflict>
</comment>
<gene>
    <name evidence="1" type="primary">dapE</name>
    <name type="ordered locus">AMF_1021</name>
</gene>
<dbReference type="EC" id="3.5.1.18" evidence="1"/>
<dbReference type="EMBL" id="CP001079">
    <property type="protein sequence ID" value="ACM49833.1"/>
    <property type="status" value="ALT_INIT"/>
    <property type="molecule type" value="Genomic_DNA"/>
</dbReference>
<dbReference type="SMR" id="B9KHC9"/>
<dbReference type="STRING" id="320483.AMF_1021"/>
<dbReference type="KEGG" id="amf:AMF_1021"/>
<dbReference type="eggNOG" id="COG0624">
    <property type="taxonomic scope" value="Bacteria"/>
</dbReference>
<dbReference type="HOGENOM" id="CLU_021802_4_0_5"/>
<dbReference type="UniPathway" id="UPA00034">
    <property type="reaction ID" value="UER00021"/>
</dbReference>
<dbReference type="Proteomes" id="UP000007307">
    <property type="component" value="Chromosome"/>
</dbReference>
<dbReference type="GO" id="GO:0008777">
    <property type="term" value="F:acetylornithine deacetylase activity"/>
    <property type="evidence" value="ECO:0007669"/>
    <property type="project" value="TreeGrafter"/>
</dbReference>
<dbReference type="GO" id="GO:0050897">
    <property type="term" value="F:cobalt ion binding"/>
    <property type="evidence" value="ECO:0007669"/>
    <property type="project" value="UniProtKB-UniRule"/>
</dbReference>
<dbReference type="GO" id="GO:0009014">
    <property type="term" value="F:succinyl-diaminopimelate desuccinylase activity"/>
    <property type="evidence" value="ECO:0007669"/>
    <property type="project" value="UniProtKB-UniRule"/>
</dbReference>
<dbReference type="GO" id="GO:0008270">
    <property type="term" value="F:zinc ion binding"/>
    <property type="evidence" value="ECO:0007669"/>
    <property type="project" value="UniProtKB-UniRule"/>
</dbReference>
<dbReference type="GO" id="GO:0019877">
    <property type="term" value="P:diaminopimelate biosynthetic process"/>
    <property type="evidence" value="ECO:0007669"/>
    <property type="project" value="UniProtKB-UniRule"/>
</dbReference>
<dbReference type="GO" id="GO:0006526">
    <property type="term" value="P:L-arginine biosynthetic process"/>
    <property type="evidence" value="ECO:0007669"/>
    <property type="project" value="TreeGrafter"/>
</dbReference>
<dbReference type="GO" id="GO:0009089">
    <property type="term" value="P:lysine biosynthetic process via diaminopimelate"/>
    <property type="evidence" value="ECO:0007669"/>
    <property type="project" value="UniProtKB-UniRule"/>
</dbReference>
<dbReference type="CDD" id="cd03891">
    <property type="entry name" value="M20_DapE_proteobac"/>
    <property type="match status" value="1"/>
</dbReference>
<dbReference type="Gene3D" id="3.30.70.360">
    <property type="match status" value="1"/>
</dbReference>
<dbReference type="Gene3D" id="3.40.630.10">
    <property type="entry name" value="Zn peptidases"/>
    <property type="match status" value="1"/>
</dbReference>
<dbReference type="HAMAP" id="MF_01690">
    <property type="entry name" value="DapE"/>
    <property type="match status" value="1"/>
</dbReference>
<dbReference type="InterPro" id="IPR001261">
    <property type="entry name" value="ArgE/DapE_CS"/>
</dbReference>
<dbReference type="InterPro" id="IPR036264">
    <property type="entry name" value="Bact_exopeptidase_dim_dom"/>
</dbReference>
<dbReference type="InterPro" id="IPR005941">
    <property type="entry name" value="DapE_proteobac"/>
</dbReference>
<dbReference type="InterPro" id="IPR002933">
    <property type="entry name" value="Peptidase_M20"/>
</dbReference>
<dbReference type="InterPro" id="IPR011650">
    <property type="entry name" value="Peptidase_M20_dimer"/>
</dbReference>
<dbReference type="InterPro" id="IPR050072">
    <property type="entry name" value="Peptidase_M20A"/>
</dbReference>
<dbReference type="NCBIfam" id="TIGR01246">
    <property type="entry name" value="dapE_proteo"/>
    <property type="match status" value="1"/>
</dbReference>
<dbReference type="NCBIfam" id="NF009557">
    <property type="entry name" value="PRK13009.1"/>
    <property type="match status" value="1"/>
</dbReference>
<dbReference type="PANTHER" id="PTHR43808">
    <property type="entry name" value="ACETYLORNITHINE DEACETYLASE"/>
    <property type="match status" value="1"/>
</dbReference>
<dbReference type="PANTHER" id="PTHR43808:SF31">
    <property type="entry name" value="N-ACETYL-L-CITRULLINE DEACETYLASE"/>
    <property type="match status" value="1"/>
</dbReference>
<dbReference type="Pfam" id="PF07687">
    <property type="entry name" value="M20_dimer"/>
    <property type="match status" value="1"/>
</dbReference>
<dbReference type="Pfam" id="PF01546">
    <property type="entry name" value="Peptidase_M20"/>
    <property type="match status" value="1"/>
</dbReference>
<dbReference type="SUPFAM" id="SSF55031">
    <property type="entry name" value="Bacterial exopeptidase dimerisation domain"/>
    <property type="match status" value="1"/>
</dbReference>
<dbReference type="SUPFAM" id="SSF53187">
    <property type="entry name" value="Zn-dependent exopeptidases"/>
    <property type="match status" value="1"/>
</dbReference>
<dbReference type="PROSITE" id="PS00759">
    <property type="entry name" value="ARGE_DAPE_CPG2_2"/>
    <property type="match status" value="1"/>
</dbReference>
<reference key="1">
    <citation type="journal article" date="2009" name="BMC Genomics">
        <title>Conservation in the face of diversity: multistrain analysis of an intracellular bacterium.</title>
        <authorList>
            <person name="Dark M.J."/>
            <person name="Herndon D.R."/>
            <person name="Kappmeyer L.S."/>
            <person name="Gonzales M.P."/>
            <person name="Nordeen E."/>
            <person name="Palmer G.H."/>
            <person name="Knowles D.P. Jr."/>
            <person name="Brayton K.A."/>
        </authorList>
    </citation>
    <scope>NUCLEOTIDE SEQUENCE [LARGE SCALE GENOMIC DNA]</scope>
    <source>
        <strain>Florida</strain>
    </source>
</reference>
<organism>
    <name type="scientific">Anaplasma marginale (strain Florida)</name>
    <dbReference type="NCBI Taxonomy" id="320483"/>
    <lineage>
        <taxon>Bacteria</taxon>
        <taxon>Pseudomonadati</taxon>
        <taxon>Pseudomonadota</taxon>
        <taxon>Alphaproteobacteria</taxon>
        <taxon>Rickettsiales</taxon>
        <taxon>Anaplasmataceae</taxon>
        <taxon>Anaplasma</taxon>
    </lineage>
</organism>
<feature type="chain" id="PRO_0000375463" description="Succinyl-diaminopimelate desuccinylase">
    <location>
        <begin position="1"/>
        <end position="381"/>
    </location>
</feature>
<feature type="active site" evidence="1">
    <location>
        <position position="74"/>
    </location>
</feature>
<feature type="active site" description="Proton acceptor" evidence="1">
    <location>
        <position position="133"/>
    </location>
</feature>
<feature type="binding site" evidence="1">
    <location>
        <position position="72"/>
    </location>
    <ligand>
        <name>Zn(2+)</name>
        <dbReference type="ChEBI" id="CHEBI:29105"/>
        <label>1</label>
    </ligand>
</feature>
<feature type="binding site" evidence="1">
    <location>
        <position position="103"/>
    </location>
    <ligand>
        <name>Zn(2+)</name>
        <dbReference type="ChEBI" id="CHEBI:29105"/>
        <label>1</label>
    </ligand>
</feature>
<feature type="binding site" evidence="1">
    <location>
        <position position="103"/>
    </location>
    <ligand>
        <name>Zn(2+)</name>
        <dbReference type="ChEBI" id="CHEBI:29105"/>
        <label>2</label>
    </ligand>
</feature>
<feature type="binding site" evidence="1">
    <location>
        <position position="134"/>
    </location>
    <ligand>
        <name>Zn(2+)</name>
        <dbReference type="ChEBI" id="CHEBI:29105"/>
        <label>2</label>
    </ligand>
</feature>
<feature type="binding site" evidence="1">
    <location>
        <position position="163"/>
    </location>
    <ligand>
        <name>Zn(2+)</name>
        <dbReference type="ChEBI" id="CHEBI:29105"/>
        <label>1</label>
    </ligand>
</feature>
<feature type="binding site" evidence="1">
    <location>
        <position position="348"/>
    </location>
    <ligand>
        <name>Zn(2+)</name>
        <dbReference type="ChEBI" id="CHEBI:29105"/>
        <label>2</label>
    </ligand>
</feature>
<name>DAPE_ANAMF</name>
<accession>B9KHC9</accession>